<organism>
    <name type="scientific">Aeromonas hydrophila subsp. hydrophila (strain ATCC 7966 / DSM 30187 / BCRC 13018 / CCUG 14551 / JCM 1027 / KCTC 2358 / NCIMB 9240 / NCTC 8049)</name>
    <dbReference type="NCBI Taxonomy" id="380703"/>
    <lineage>
        <taxon>Bacteria</taxon>
        <taxon>Pseudomonadati</taxon>
        <taxon>Pseudomonadota</taxon>
        <taxon>Gammaproteobacteria</taxon>
        <taxon>Aeromonadales</taxon>
        <taxon>Aeromonadaceae</taxon>
        <taxon>Aeromonas</taxon>
    </lineage>
</organism>
<name>LEUC_AERHH</name>
<dbReference type="EC" id="4.2.1.33" evidence="1"/>
<dbReference type="EMBL" id="CP000462">
    <property type="protein sequence ID" value="ABK39845.1"/>
    <property type="molecule type" value="Genomic_DNA"/>
</dbReference>
<dbReference type="RefSeq" id="WP_011704820.1">
    <property type="nucleotide sequence ID" value="NC_008570.1"/>
</dbReference>
<dbReference type="RefSeq" id="YP_855421.1">
    <property type="nucleotide sequence ID" value="NC_008570.1"/>
</dbReference>
<dbReference type="SMR" id="A0KGM7"/>
<dbReference type="STRING" id="380703.AHA_0880"/>
<dbReference type="EnsemblBacteria" id="ABK39845">
    <property type="protein sequence ID" value="ABK39845"/>
    <property type="gene ID" value="AHA_0880"/>
</dbReference>
<dbReference type="GeneID" id="4488955"/>
<dbReference type="KEGG" id="aha:AHA_0880"/>
<dbReference type="PATRIC" id="fig|380703.7.peg.881"/>
<dbReference type="eggNOG" id="COG0065">
    <property type="taxonomic scope" value="Bacteria"/>
</dbReference>
<dbReference type="HOGENOM" id="CLU_006714_3_4_6"/>
<dbReference type="OrthoDB" id="9802769at2"/>
<dbReference type="UniPathway" id="UPA00048">
    <property type="reaction ID" value="UER00071"/>
</dbReference>
<dbReference type="Proteomes" id="UP000000756">
    <property type="component" value="Chromosome"/>
</dbReference>
<dbReference type="GO" id="GO:0003861">
    <property type="term" value="F:3-isopropylmalate dehydratase activity"/>
    <property type="evidence" value="ECO:0007669"/>
    <property type="project" value="UniProtKB-UniRule"/>
</dbReference>
<dbReference type="GO" id="GO:0051539">
    <property type="term" value="F:4 iron, 4 sulfur cluster binding"/>
    <property type="evidence" value="ECO:0007669"/>
    <property type="project" value="UniProtKB-KW"/>
</dbReference>
<dbReference type="GO" id="GO:0046872">
    <property type="term" value="F:metal ion binding"/>
    <property type="evidence" value="ECO:0007669"/>
    <property type="project" value="UniProtKB-KW"/>
</dbReference>
<dbReference type="GO" id="GO:0009098">
    <property type="term" value="P:L-leucine biosynthetic process"/>
    <property type="evidence" value="ECO:0007669"/>
    <property type="project" value="UniProtKB-UniRule"/>
</dbReference>
<dbReference type="CDD" id="cd01583">
    <property type="entry name" value="IPMI"/>
    <property type="match status" value="1"/>
</dbReference>
<dbReference type="FunFam" id="3.30.499.10:FF:000006">
    <property type="entry name" value="3-isopropylmalate dehydratase large subunit"/>
    <property type="match status" value="1"/>
</dbReference>
<dbReference type="FunFam" id="3.30.499.10:FF:000007">
    <property type="entry name" value="3-isopropylmalate dehydratase large subunit"/>
    <property type="match status" value="1"/>
</dbReference>
<dbReference type="Gene3D" id="3.30.499.10">
    <property type="entry name" value="Aconitase, domain 3"/>
    <property type="match status" value="2"/>
</dbReference>
<dbReference type="HAMAP" id="MF_01026">
    <property type="entry name" value="LeuC_type1"/>
    <property type="match status" value="1"/>
</dbReference>
<dbReference type="InterPro" id="IPR004430">
    <property type="entry name" value="3-IsopropMal_deHydase_lsu"/>
</dbReference>
<dbReference type="InterPro" id="IPR015931">
    <property type="entry name" value="Acnase/IPM_dHydase_lsu_aba_1/3"/>
</dbReference>
<dbReference type="InterPro" id="IPR001030">
    <property type="entry name" value="Acoase/IPM_deHydtase_lsu_aba"/>
</dbReference>
<dbReference type="InterPro" id="IPR018136">
    <property type="entry name" value="Aconitase_4Fe-4S_BS"/>
</dbReference>
<dbReference type="InterPro" id="IPR036008">
    <property type="entry name" value="Aconitase_4Fe-4S_dom"/>
</dbReference>
<dbReference type="InterPro" id="IPR050067">
    <property type="entry name" value="IPM_dehydratase_rel_enz"/>
</dbReference>
<dbReference type="InterPro" id="IPR033941">
    <property type="entry name" value="IPMI_cat"/>
</dbReference>
<dbReference type="NCBIfam" id="TIGR00170">
    <property type="entry name" value="leuC"/>
    <property type="match status" value="1"/>
</dbReference>
<dbReference type="NCBIfam" id="NF004016">
    <property type="entry name" value="PRK05478.1"/>
    <property type="match status" value="1"/>
</dbReference>
<dbReference type="NCBIfam" id="NF009116">
    <property type="entry name" value="PRK12466.1"/>
    <property type="match status" value="1"/>
</dbReference>
<dbReference type="PANTHER" id="PTHR43822:SF9">
    <property type="entry name" value="3-ISOPROPYLMALATE DEHYDRATASE"/>
    <property type="match status" value="1"/>
</dbReference>
<dbReference type="PANTHER" id="PTHR43822">
    <property type="entry name" value="HOMOACONITASE, MITOCHONDRIAL-RELATED"/>
    <property type="match status" value="1"/>
</dbReference>
<dbReference type="Pfam" id="PF00330">
    <property type="entry name" value="Aconitase"/>
    <property type="match status" value="1"/>
</dbReference>
<dbReference type="PRINTS" id="PR00415">
    <property type="entry name" value="ACONITASE"/>
</dbReference>
<dbReference type="SUPFAM" id="SSF53732">
    <property type="entry name" value="Aconitase iron-sulfur domain"/>
    <property type="match status" value="1"/>
</dbReference>
<dbReference type="PROSITE" id="PS00450">
    <property type="entry name" value="ACONITASE_1"/>
    <property type="match status" value="1"/>
</dbReference>
<dbReference type="PROSITE" id="PS01244">
    <property type="entry name" value="ACONITASE_2"/>
    <property type="match status" value="1"/>
</dbReference>
<gene>
    <name evidence="1" type="primary">leuC</name>
    <name type="ordered locus">AHA_0880</name>
</gene>
<sequence length="465" mass="49883">MAKTLYQKVFDAHVVREVEGETPLIYIDRHLVHEVTSPQAFDGLRAMNRQLRRPDLTWATMDHNVSTTTKDIAASGEMARIQMETLAANCKEFGVRLYDLNHKYQGIVHVMGPELGITLPGTTIVCGDSHTATHGAFGSLAFGIGTSEVEHVMATQTLKQGRAKTMRISVNGKLAAGISAKDVVLAIIGRVGHAGGTGYVVEFAGEAIEGLTMEGRMTVCNMAIELGAKAGMIAPDQTTIDYIRGKEFAPKGETLEQAIAYWQSLKSDEGARFDAEVVLDAADIAPQVTWGTNPGQVIAVNEPIPAPESFSDLMEQQSARKALAYMDLQPGQKLSDVAIDKVFIGSCTNSRIEDLRAAAAIARGRKVAAGVQALVVPGSEQVKAQAEAEGLDKIFIEAGFEWRLPGCSMCLAMNNDRLQPGERCASTSNRNFEGRQGRAGRTHLVSPAMAAAAAVTGRFADIRAL</sequence>
<proteinExistence type="inferred from homology"/>
<keyword id="KW-0004">4Fe-4S</keyword>
<keyword id="KW-0028">Amino-acid biosynthesis</keyword>
<keyword id="KW-0100">Branched-chain amino acid biosynthesis</keyword>
<keyword id="KW-0408">Iron</keyword>
<keyword id="KW-0411">Iron-sulfur</keyword>
<keyword id="KW-0432">Leucine biosynthesis</keyword>
<keyword id="KW-0456">Lyase</keyword>
<keyword id="KW-0479">Metal-binding</keyword>
<keyword id="KW-1185">Reference proteome</keyword>
<feature type="chain" id="PRO_1000063520" description="3-isopropylmalate dehydratase large subunit">
    <location>
        <begin position="1"/>
        <end position="465"/>
    </location>
</feature>
<feature type="binding site" evidence="1">
    <location>
        <position position="347"/>
    </location>
    <ligand>
        <name>[4Fe-4S] cluster</name>
        <dbReference type="ChEBI" id="CHEBI:49883"/>
    </ligand>
</feature>
<feature type="binding site" evidence="1">
    <location>
        <position position="407"/>
    </location>
    <ligand>
        <name>[4Fe-4S] cluster</name>
        <dbReference type="ChEBI" id="CHEBI:49883"/>
    </ligand>
</feature>
<feature type="binding site" evidence="1">
    <location>
        <position position="410"/>
    </location>
    <ligand>
        <name>[4Fe-4S] cluster</name>
        <dbReference type="ChEBI" id="CHEBI:49883"/>
    </ligand>
</feature>
<accession>A0KGM7</accession>
<evidence type="ECO:0000255" key="1">
    <source>
        <dbReference type="HAMAP-Rule" id="MF_01026"/>
    </source>
</evidence>
<comment type="function">
    <text evidence="1">Catalyzes the isomerization between 2-isopropylmalate and 3-isopropylmalate, via the formation of 2-isopropylmaleate.</text>
</comment>
<comment type="catalytic activity">
    <reaction evidence="1">
        <text>(2R,3S)-3-isopropylmalate = (2S)-2-isopropylmalate</text>
        <dbReference type="Rhea" id="RHEA:32287"/>
        <dbReference type="ChEBI" id="CHEBI:1178"/>
        <dbReference type="ChEBI" id="CHEBI:35121"/>
        <dbReference type="EC" id="4.2.1.33"/>
    </reaction>
</comment>
<comment type="cofactor">
    <cofactor evidence="1">
        <name>[4Fe-4S] cluster</name>
        <dbReference type="ChEBI" id="CHEBI:49883"/>
    </cofactor>
    <text evidence="1">Binds 1 [4Fe-4S] cluster per subunit.</text>
</comment>
<comment type="pathway">
    <text evidence="1">Amino-acid biosynthesis; L-leucine biosynthesis; L-leucine from 3-methyl-2-oxobutanoate: step 2/4.</text>
</comment>
<comment type="subunit">
    <text evidence="1">Heterodimer of LeuC and LeuD.</text>
</comment>
<comment type="similarity">
    <text evidence="1">Belongs to the aconitase/IPM isomerase family. LeuC type 1 subfamily.</text>
</comment>
<protein>
    <recommendedName>
        <fullName evidence="1">3-isopropylmalate dehydratase large subunit</fullName>
        <ecNumber evidence="1">4.2.1.33</ecNumber>
    </recommendedName>
    <alternativeName>
        <fullName evidence="1">Alpha-IPM isomerase</fullName>
        <shortName evidence="1">IPMI</shortName>
    </alternativeName>
    <alternativeName>
        <fullName evidence="1">Isopropylmalate isomerase</fullName>
    </alternativeName>
</protein>
<reference key="1">
    <citation type="journal article" date="2006" name="J. Bacteriol.">
        <title>Genome sequence of Aeromonas hydrophila ATCC 7966T: jack of all trades.</title>
        <authorList>
            <person name="Seshadri R."/>
            <person name="Joseph S.W."/>
            <person name="Chopra A.K."/>
            <person name="Sha J."/>
            <person name="Shaw J."/>
            <person name="Graf J."/>
            <person name="Haft D.H."/>
            <person name="Wu M."/>
            <person name="Ren Q."/>
            <person name="Rosovitz M.J."/>
            <person name="Madupu R."/>
            <person name="Tallon L."/>
            <person name="Kim M."/>
            <person name="Jin S."/>
            <person name="Vuong H."/>
            <person name="Stine O.C."/>
            <person name="Ali A."/>
            <person name="Horneman A.J."/>
            <person name="Heidelberg J.F."/>
        </authorList>
    </citation>
    <scope>NUCLEOTIDE SEQUENCE [LARGE SCALE GENOMIC DNA]</scope>
    <source>
        <strain>ATCC 7966 / DSM 30187 / BCRC 13018 / CCUG 14551 / JCM 1027 / KCTC 2358 / NCIMB 9240 / NCTC 8049</strain>
    </source>
</reference>